<proteinExistence type="inferred from homology"/>
<reference key="1">
    <citation type="journal article" date="2007" name="Science">
        <title>Legumes symbioses: absence of nod genes in photosynthetic bradyrhizobia.</title>
        <authorList>
            <person name="Giraud E."/>
            <person name="Moulin L."/>
            <person name="Vallenet D."/>
            <person name="Barbe V."/>
            <person name="Cytryn E."/>
            <person name="Avarre J.-C."/>
            <person name="Jaubert M."/>
            <person name="Simon D."/>
            <person name="Cartieaux F."/>
            <person name="Prin Y."/>
            <person name="Bena G."/>
            <person name="Hannibal L."/>
            <person name="Fardoux J."/>
            <person name="Kojadinovic M."/>
            <person name="Vuillet L."/>
            <person name="Lajus A."/>
            <person name="Cruveiller S."/>
            <person name="Rouy Z."/>
            <person name="Mangenot S."/>
            <person name="Segurens B."/>
            <person name="Dossat C."/>
            <person name="Franck W.L."/>
            <person name="Chang W.-S."/>
            <person name="Saunders E."/>
            <person name="Bruce D."/>
            <person name="Richardson P."/>
            <person name="Normand P."/>
            <person name="Dreyfus B."/>
            <person name="Pignol D."/>
            <person name="Stacey G."/>
            <person name="Emerich D."/>
            <person name="Vermeglio A."/>
            <person name="Medigue C."/>
            <person name="Sadowsky M."/>
        </authorList>
    </citation>
    <scope>NUCLEOTIDE SEQUENCE [LARGE SCALE GENOMIC DNA]</scope>
    <source>
        <strain>ORS 278</strain>
    </source>
</reference>
<gene>
    <name evidence="1" type="primary">pnp</name>
    <name type="ordered locus">BRADO0057</name>
</gene>
<protein>
    <recommendedName>
        <fullName evidence="1">Polyribonucleotide nucleotidyltransferase</fullName>
        <ecNumber evidence="1">2.7.7.8</ecNumber>
    </recommendedName>
    <alternativeName>
        <fullName evidence="1">Polynucleotide phosphorylase</fullName>
        <shortName evidence="1">PNPase</shortName>
    </alternativeName>
</protein>
<sequence>MFTKHSVEIDWGGRPLKLETGKIARQADGAVVATYGETVVLATVVAAKAPRDGVDFLPLTVDYQEKAYAAGRIPGGYFKREGRPTEKETLVSRLIDRPIRPLFVDSWRNETQVIVTVLSHDMENDPDIVALVAASAALTLSGVPFKGPIGAARVGFANDEYILNPTLDEMADTQLDLVVAGTSDAVLMVESEAKELNEDIMLGAVMFGHRHFQPVINAIIELAEKAAKDPRDVAIIDNSAIEKEMLGIAEQDLRKAYAIAIKQERYAAVGAVKEKVMAYFFPEGQEPKYDKLRVAAVFKELEAKIVRWNILDTGKRIDGRDAKTVRNIVCEVGVLPRAHGSALFTRGETQALVVTTLGTGEDEQYIDALSGTYKETFLLHYNFPPYSVGETGRLGGTKRREIGHGKLAWRAIHPVLPPHHEFPYTTRVVSEVTESNGSSSMATVCGSSLALMDAGVPLKRPTAGIAMGLILEGSRFAVLSDILGDEDHLGDMDFKVAGTESGITSLQMDIKIEGITEEIMRVALGQAREGRIHILGEMSKALTAARAELGEYAPRIETFKIATDKIREVIGTGGKVIREIVEKTGAKVNIEDDGTVKVASSDGEAMKAAIKWIKSIASDPEVGQIYDGTVVKVMEFGAFVNFFGTRDGLVHISQLADKRVQKTTDVVKEGDKVKVKLLGFDDRGKTRLSMKVVDQTTGEDLEAKQKDAPAEAPREAAGE</sequence>
<organism>
    <name type="scientific">Bradyrhizobium sp. (strain ORS 278)</name>
    <dbReference type="NCBI Taxonomy" id="114615"/>
    <lineage>
        <taxon>Bacteria</taxon>
        <taxon>Pseudomonadati</taxon>
        <taxon>Pseudomonadota</taxon>
        <taxon>Alphaproteobacteria</taxon>
        <taxon>Hyphomicrobiales</taxon>
        <taxon>Nitrobacteraceae</taxon>
        <taxon>Bradyrhizobium</taxon>
    </lineage>
</organism>
<evidence type="ECO:0000255" key="1">
    <source>
        <dbReference type="HAMAP-Rule" id="MF_01595"/>
    </source>
</evidence>
<evidence type="ECO:0000256" key="2">
    <source>
        <dbReference type="SAM" id="MobiDB-lite"/>
    </source>
</evidence>
<name>PNP_BRASO</name>
<feature type="chain" id="PRO_0000329544" description="Polyribonucleotide nucleotidyltransferase">
    <location>
        <begin position="1"/>
        <end position="719"/>
    </location>
</feature>
<feature type="domain" description="KH" evidence="1">
    <location>
        <begin position="554"/>
        <end position="613"/>
    </location>
</feature>
<feature type="domain" description="S1 motif" evidence="1">
    <location>
        <begin position="623"/>
        <end position="691"/>
    </location>
</feature>
<feature type="region of interest" description="Disordered" evidence="2">
    <location>
        <begin position="691"/>
        <end position="719"/>
    </location>
</feature>
<feature type="compositionally biased region" description="Basic and acidic residues" evidence="2">
    <location>
        <begin position="701"/>
        <end position="719"/>
    </location>
</feature>
<feature type="binding site" evidence="1">
    <location>
        <position position="487"/>
    </location>
    <ligand>
        <name>Mg(2+)</name>
        <dbReference type="ChEBI" id="CHEBI:18420"/>
    </ligand>
</feature>
<feature type="binding site" evidence="1">
    <location>
        <position position="493"/>
    </location>
    <ligand>
        <name>Mg(2+)</name>
        <dbReference type="ChEBI" id="CHEBI:18420"/>
    </ligand>
</feature>
<comment type="function">
    <text evidence="1">Involved in mRNA degradation. Catalyzes the phosphorolysis of single-stranded polyribonucleotides processively in the 3'- to 5'-direction.</text>
</comment>
<comment type="catalytic activity">
    <reaction evidence="1">
        <text>RNA(n+1) + phosphate = RNA(n) + a ribonucleoside 5'-diphosphate</text>
        <dbReference type="Rhea" id="RHEA:22096"/>
        <dbReference type="Rhea" id="RHEA-COMP:14527"/>
        <dbReference type="Rhea" id="RHEA-COMP:17342"/>
        <dbReference type="ChEBI" id="CHEBI:43474"/>
        <dbReference type="ChEBI" id="CHEBI:57930"/>
        <dbReference type="ChEBI" id="CHEBI:140395"/>
        <dbReference type="EC" id="2.7.7.8"/>
    </reaction>
</comment>
<comment type="cofactor">
    <cofactor evidence="1">
        <name>Mg(2+)</name>
        <dbReference type="ChEBI" id="CHEBI:18420"/>
    </cofactor>
</comment>
<comment type="subcellular location">
    <subcellularLocation>
        <location evidence="1">Cytoplasm</location>
    </subcellularLocation>
</comment>
<comment type="similarity">
    <text evidence="1">Belongs to the polyribonucleotide nucleotidyltransferase family.</text>
</comment>
<accession>A4YJF3</accession>
<keyword id="KW-0963">Cytoplasm</keyword>
<keyword id="KW-0460">Magnesium</keyword>
<keyword id="KW-0479">Metal-binding</keyword>
<keyword id="KW-0548">Nucleotidyltransferase</keyword>
<keyword id="KW-1185">Reference proteome</keyword>
<keyword id="KW-0694">RNA-binding</keyword>
<keyword id="KW-0808">Transferase</keyword>
<dbReference type="EC" id="2.7.7.8" evidence="1"/>
<dbReference type="EMBL" id="CU234118">
    <property type="protein sequence ID" value="CAL74029.1"/>
    <property type="molecule type" value="Genomic_DNA"/>
</dbReference>
<dbReference type="RefSeq" id="WP_011923331.1">
    <property type="nucleotide sequence ID" value="NC_009445.1"/>
</dbReference>
<dbReference type="SMR" id="A4YJF3"/>
<dbReference type="STRING" id="114615.BRADO0057"/>
<dbReference type="KEGG" id="bra:BRADO0057"/>
<dbReference type="eggNOG" id="COG1185">
    <property type="taxonomic scope" value="Bacteria"/>
</dbReference>
<dbReference type="HOGENOM" id="CLU_004217_2_2_5"/>
<dbReference type="OrthoDB" id="9804305at2"/>
<dbReference type="Proteomes" id="UP000001994">
    <property type="component" value="Chromosome"/>
</dbReference>
<dbReference type="GO" id="GO:0005829">
    <property type="term" value="C:cytosol"/>
    <property type="evidence" value="ECO:0007669"/>
    <property type="project" value="TreeGrafter"/>
</dbReference>
<dbReference type="GO" id="GO:0000175">
    <property type="term" value="F:3'-5'-RNA exonuclease activity"/>
    <property type="evidence" value="ECO:0007669"/>
    <property type="project" value="TreeGrafter"/>
</dbReference>
<dbReference type="GO" id="GO:0000287">
    <property type="term" value="F:magnesium ion binding"/>
    <property type="evidence" value="ECO:0007669"/>
    <property type="project" value="UniProtKB-UniRule"/>
</dbReference>
<dbReference type="GO" id="GO:0004654">
    <property type="term" value="F:polyribonucleotide nucleotidyltransferase activity"/>
    <property type="evidence" value="ECO:0007669"/>
    <property type="project" value="UniProtKB-UniRule"/>
</dbReference>
<dbReference type="GO" id="GO:0003723">
    <property type="term" value="F:RNA binding"/>
    <property type="evidence" value="ECO:0007669"/>
    <property type="project" value="UniProtKB-UniRule"/>
</dbReference>
<dbReference type="GO" id="GO:0006402">
    <property type="term" value="P:mRNA catabolic process"/>
    <property type="evidence" value="ECO:0007669"/>
    <property type="project" value="UniProtKB-UniRule"/>
</dbReference>
<dbReference type="GO" id="GO:0006396">
    <property type="term" value="P:RNA processing"/>
    <property type="evidence" value="ECO:0007669"/>
    <property type="project" value="InterPro"/>
</dbReference>
<dbReference type="CDD" id="cd02393">
    <property type="entry name" value="KH-I_PNPase"/>
    <property type="match status" value="1"/>
</dbReference>
<dbReference type="CDD" id="cd11363">
    <property type="entry name" value="RNase_PH_PNPase_1"/>
    <property type="match status" value="1"/>
</dbReference>
<dbReference type="CDD" id="cd11364">
    <property type="entry name" value="RNase_PH_PNPase_2"/>
    <property type="match status" value="1"/>
</dbReference>
<dbReference type="CDD" id="cd04472">
    <property type="entry name" value="S1_PNPase"/>
    <property type="match status" value="1"/>
</dbReference>
<dbReference type="FunFam" id="2.40.50.140:FF:000107">
    <property type="entry name" value="Polyribonucleotide nucleotidyltransferase"/>
    <property type="match status" value="1"/>
</dbReference>
<dbReference type="FunFam" id="3.30.1370.10:FF:000001">
    <property type="entry name" value="Polyribonucleotide nucleotidyltransferase"/>
    <property type="match status" value="1"/>
</dbReference>
<dbReference type="FunFam" id="3.30.230.70:FF:000001">
    <property type="entry name" value="Polyribonucleotide nucleotidyltransferase"/>
    <property type="match status" value="1"/>
</dbReference>
<dbReference type="FunFam" id="3.30.230.70:FF:000002">
    <property type="entry name" value="Polyribonucleotide nucleotidyltransferase"/>
    <property type="match status" value="1"/>
</dbReference>
<dbReference type="Gene3D" id="3.30.230.70">
    <property type="entry name" value="GHMP Kinase, N-terminal domain"/>
    <property type="match status" value="2"/>
</dbReference>
<dbReference type="Gene3D" id="3.30.1370.10">
    <property type="entry name" value="K Homology domain, type 1"/>
    <property type="match status" value="1"/>
</dbReference>
<dbReference type="Gene3D" id="2.40.50.140">
    <property type="entry name" value="Nucleic acid-binding proteins"/>
    <property type="match status" value="1"/>
</dbReference>
<dbReference type="HAMAP" id="MF_01595">
    <property type="entry name" value="PNPase"/>
    <property type="match status" value="1"/>
</dbReference>
<dbReference type="InterPro" id="IPR001247">
    <property type="entry name" value="ExoRNase_PH_dom1"/>
</dbReference>
<dbReference type="InterPro" id="IPR015847">
    <property type="entry name" value="ExoRNase_PH_dom2"/>
</dbReference>
<dbReference type="InterPro" id="IPR036345">
    <property type="entry name" value="ExoRNase_PH_dom2_sf"/>
</dbReference>
<dbReference type="InterPro" id="IPR004087">
    <property type="entry name" value="KH_dom"/>
</dbReference>
<dbReference type="InterPro" id="IPR004088">
    <property type="entry name" value="KH_dom_type_1"/>
</dbReference>
<dbReference type="InterPro" id="IPR036612">
    <property type="entry name" value="KH_dom_type_1_sf"/>
</dbReference>
<dbReference type="InterPro" id="IPR012340">
    <property type="entry name" value="NA-bd_OB-fold"/>
</dbReference>
<dbReference type="InterPro" id="IPR012162">
    <property type="entry name" value="PNPase"/>
</dbReference>
<dbReference type="InterPro" id="IPR027408">
    <property type="entry name" value="PNPase/RNase_PH_dom_sf"/>
</dbReference>
<dbReference type="InterPro" id="IPR015848">
    <property type="entry name" value="PNPase_PH_RNA-bd_bac/org-type"/>
</dbReference>
<dbReference type="InterPro" id="IPR036456">
    <property type="entry name" value="PNPase_PH_RNA-bd_sf"/>
</dbReference>
<dbReference type="InterPro" id="IPR020568">
    <property type="entry name" value="Ribosomal_Su5_D2-typ_SF"/>
</dbReference>
<dbReference type="InterPro" id="IPR003029">
    <property type="entry name" value="S1_domain"/>
</dbReference>
<dbReference type="NCBIfam" id="TIGR03591">
    <property type="entry name" value="polynuc_phos"/>
    <property type="match status" value="1"/>
</dbReference>
<dbReference type="NCBIfam" id="NF008805">
    <property type="entry name" value="PRK11824.1"/>
    <property type="match status" value="1"/>
</dbReference>
<dbReference type="PANTHER" id="PTHR11252">
    <property type="entry name" value="POLYRIBONUCLEOTIDE NUCLEOTIDYLTRANSFERASE"/>
    <property type="match status" value="1"/>
</dbReference>
<dbReference type="PANTHER" id="PTHR11252:SF0">
    <property type="entry name" value="POLYRIBONUCLEOTIDE NUCLEOTIDYLTRANSFERASE 1, MITOCHONDRIAL"/>
    <property type="match status" value="1"/>
</dbReference>
<dbReference type="Pfam" id="PF00013">
    <property type="entry name" value="KH_1"/>
    <property type="match status" value="1"/>
</dbReference>
<dbReference type="Pfam" id="PF03726">
    <property type="entry name" value="PNPase"/>
    <property type="match status" value="1"/>
</dbReference>
<dbReference type="Pfam" id="PF01138">
    <property type="entry name" value="RNase_PH"/>
    <property type="match status" value="2"/>
</dbReference>
<dbReference type="Pfam" id="PF03725">
    <property type="entry name" value="RNase_PH_C"/>
    <property type="match status" value="1"/>
</dbReference>
<dbReference type="Pfam" id="PF00575">
    <property type="entry name" value="S1"/>
    <property type="match status" value="1"/>
</dbReference>
<dbReference type="PIRSF" id="PIRSF005499">
    <property type="entry name" value="PNPase"/>
    <property type="match status" value="1"/>
</dbReference>
<dbReference type="SMART" id="SM00322">
    <property type="entry name" value="KH"/>
    <property type="match status" value="1"/>
</dbReference>
<dbReference type="SMART" id="SM00316">
    <property type="entry name" value="S1"/>
    <property type="match status" value="1"/>
</dbReference>
<dbReference type="SUPFAM" id="SSF54791">
    <property type="entry name" value="Eukaryotic type KH-domain (KH-domain type I)"/>
    <property type="match status" value="1"/>
</dbReference>
<dbReference type="SUPFAM" id="SSF50249">
    <property type="entry name" value="Nucleic acid-binding proteins"/>
    <property type="match status" value="1"/>
</dbReference>
<dbReference type="SUPFAM" id="SSF46915">
    <property type="entry name" value="Polynucleotide phosphorylase/guanosine pentaphosphate synthase (PNPase/GPSI), domain 3"/>
    <property type="match status" value="1"/>
</dbReference>
<dbReference type="SUPFAM" id="SSF55666">
    <property type="entry name" value="Ribonuclease PH domain 2-like"/>
    <property type="match status" value="2"/>
</dbReference>
<dbReference type="SUPFAM" id="SSF54211">
    <property type="entry name" value="Ribosomal protein S5 domain 2-like"/>
    <property type="match status" value="2"/>
</dbReference>
<dbReference type="PROSITE" id="PS50084">
    <property type="entry name" value="KH_TYPE_1"/>
    <property type="match status" value="1"/>
</dbReference>
<dbReference type="PROSITE" id="PS50126">
    <property type="entry name" value="S1"/>
    <property type="match status" value="1"/>
</dbReference>